<gene>
    <name evidence="1" type="primary">metAS</name>
    <name type="ordered locus">Ssed_1472</name>
</gene>
<comment type="function">
    <text evidence="1">Transfers a succinyl group from succinyl-CoA to L-homoserine, forming succinyl-L-homoserine.</text>
</comment>
<comment type="catalytic activity">
    <reaction evidence="1">
        <text>L-homoserine + succinyl-CoA = O-succinyl-L-homoserine + CoA</text>
        <dbReference type="Rhea" id="RHEA:22008"/>
        <dbReference type="ChEBI" id="CHEBI:57287"/>
        <dbReference type="ChEBI" id="CHEBI:57292"/>
        <dbReference type="ChEBI" id="CHEBI:57476"/>
        <dbReference type="ChEBI" id="CHEBI:57661"/>
        <dbReference type="EC" id="2.3.1.46"/>
    </reaction>
</comment>
<comment type="pathway">
    <text evidence="1">Amino-acid biosynthesis; L-methionine biosynthesis via de novo pathway; O-succinyl-L-homoserine from L-homoserine: step 1/1.</text>
</comment>
<comment type="subcellular location">
    <subcellularLocation>
        <location evidence="1">Cytoplasm</location>
    </subcellularLocation>
</comment>
<comment type="similarity">
    <text evidence="1">Belongs to the MetA family.</text>
</comment>
<accession>A8FTB0</accession>
<evidence type="ECO:0000255" key="1">
    <source>
        <dbReference type="HAMAP-Rule" id="MF_00295"/>
    </source>
</evidence>
<name>METAS_SHESH</name>
<proteinExistence type="inferred from homology"/>
<keyword id="KW-0012">Acyltransferase</keyword>
<keyword id="KW-0028">Amino-acid biosynthesis</keyword>
<keyword id="KW-0963">Cytoplasm</keyword>
<keyword id="KW-0486">Methionine biosynthesis</keyword>
<keyword id="KW-1185">Reference proteome</keyword>
<keyword id="KW-0808">Transferase</keyword>
<sequence length="314" mass="36474">MPVKIPDDLPAAEILESENIFVMSETRAANQDIRPMKVLILNLMPNKIETETQLLRLLGNTPLQVDVDLLRIHDKESRHTSIDHMNNFYRDFEAVRHKNYDGLIITGAPLGQVEFEDVSYWDHIREIIDWSQQHVTSVLFLCWAAHAALFHLYGLNRKLLKEKRSGVFLHKRTHRHVPLLRGFDDEFLAPHSRFAEMDVQLLKAHPALQVLTESDEAGAYMVLSTNNRNLFVMGHPEYQKSTLKDEYFRDLGAGLQPEIPQNYFRHNDPGQDPVARWYGHGSLLISNWLNYYVYQLTPYNLDDMSGITPWENEV</sequence>
<dbReference type="EC" id="2.3.1.46" evidence="1"/>
<dbReference type="EMBL" id="CP000821">
    <property type="protein sequence ID" value="ABV36083.1"/>
    <property type="molecule type" value="Genomic_DNA"/>
</dbReference>
<dbReference type="RefSeq" id="WP_012141819.1">
    <property type="nucleotide sequence ID" value="NC_009831.1"/>
</dbReference>
<dbReference type="SMR" id="A8FTB0"/>
<dbReference type="STRING" id="425104.Ssed_1472"/>
<dbReference type="KEGG" id="sse:Ssed_1472"/>
<dbReference type="eggNOG" id="COG1897">
    <property type="taxonomic scope" value="Bacteria"/>
</dbReference>
<dbReference type="HOGENOM" id="CLU_057851_0_1_6"/>
<dbReference type="OrthoDB" id="9772423at2"/>
<dbReference type="UniPathway" id="UPA00051">
    <property type="reaction ID" value="UER00075"/>
</dbReference>
<dbReference type="Proteomes" id="UP000002015">
    <property type="component" value="Chromosome"/>
</dbReference>
<dbReference type="GO" id="GO:0005737">
    <property type="term" value="C:cytoplasm"/>
    <property type="evidence" value="ECO:0007669"/>
    <property type="project" value="UniProtKB-SubCell"/>
</dbReference>
<dbReference type="GO" id="GO:0004414">
    <property type="term" value="F:homoserine O-acetyltransferase activity"/>
    <property type="evidence" value="ECO:0007669"/>
    <property type="project" value="UniProtKB-UniRule"/>
</dbReference>
<dbReference type="GO" id="GO:0008899">
    <property type="term" value="F:homoserine O-succinyltransferase activity"/>
    <property type="evidence" value="ECO:0007669"/>
    <property type="project" value="UniProtKB-EC"/>
</dbReference>
<dbReference type="GO" id="GO:0019281">
    <property type="term" value="P:L-methionine biosynthetic process from homoserine via O-succinyl-L-homoserine and cystathionine"/>
    <property type="evidence" value="ECO:0007669"/>
    <property type="project" value="InterPro"/>
</dbReference>
<dbReference type="CDD" id="cd03131">
    <property type="entry name" value="GATase1_HTS"/>
    <property type="match status" value="1"/>
</dbReference>
<dbReference type="FunFam" id="3.40.50.880:FF:000004">
    <property type="entry name" value="Homoserine O-succinyltransferase"/>
    <property type="match status" value="1"/>
</dbReference>
<dbReference type="Gene3D" id="3.40.50.880">
    <property type="match status" value="1"/>
</dbReference>
<dbReference type="HAMAP" id="MF_00295">
    <property type="entry name" value="MetA_acyltransf"/>
    <property type="match status" value="1"/>
</dbReference>
<dbReference type="InterPro" id="IPR029062">
    <property type="entry name" value="Class_I_gatase-like"/>
</dbReference>
<dbReference type="InterPro" id="IPR005697">
    <property type="entry name" value="HST_MetA"/>
</dbReference>
<dbReference type="InterPro" id="IPR033752">
    <property type="entry name" value="MetA_family"/>
</dbReference>
<dbReference type="NCBIfam" id="TIGR01001">
    <property type="entry name" value="metA"/>
    <property type="match status" value="1"/>
</dbReference>
<dbReference type="PANTHER" id="PTHR20919">
    <property type="entry name" value="HOMOSERINE O-SUCCINYLTRANSFERASE"/>
    <property type="match status" value="1"/>
</dbReference>
<dbReference type="PANTHER" id="PTHR20919:SF0">
    <property type="entry name" value="HOMOSERINE O-SUCCINYLTRANSFERASE"/>
    <property type="match status" value="1"/>
</dbReference>
<dbReference type="Pfam" id="PF04204">
    <property type="entry name" value="HTS"/>
    <property type="match status" value="1"/>
</dbReference>
<dbReference type="PIRSF" id="PIRSF000450">
    <property type="entry name" value="H_ser_succinyltr"/>
    <property type="match status" value="1"/>
</dbReference>
<dbReference type="SUPFAM" id="SSF52317">
    <property type="entry name" value="Class I glutamine amidotransferase-like"/>
    <property type="match status" value="1"/>
</dbReference>
<organism>
    <name type="scientific">Shewanella sediminis (strain HAW-EB3)</name>
    <dbReference type="NCBI Taxonomy" id="425104"/>
    <lineage>
        <taxon>Bacteria</taxon>
        <taxon>Pseudomonadati</taxon>
        <taxon>Pseudomonadota</taxon>
        <taxon>Gammaproteobacteria</taxon>
        <taxon>Alteromonadales</taxon>
        <taxon>Shewanellaceae</taxon>
        <taxon>Shewanella</taxon>
    </lineage>
</organism>
<feature type="chain" id="PRO_1000078939" description="Homoserine O-succinyltransferase">
    <location>
        <begin position="1"/>
        <end position="314"/>
    </location>
</feature>
<feature type="active site" description="Acyl-thioester intermediate" evidence="1">
    <location>
        <position position="142"/>
    </location>
</feature>
<feature type="active site" description="Proton acceptor" evidence="1">
    <location>
        <position position="235"/>
    </location>
</feature>
<feature type="active site" evidence="1">
    <location>
        <position position="237"/>
    </location>
</feature>
<feature type="binding site" evidence="1">
    <location>
        <position position="163"/>
    </location>
    <ligand>
        <name>substrate</name>
    </ligand>
</feature>
<feature type="binding site" evidence="1">
    <location>
        <position position="192"/>
    </location>
    <ligand>
        <name>substrate</name>
    </ligand>
</feature>
<feature type="binding site" evidence="1">
    <location>
        <position position="249"/>
    </location>
    <ligand>
        <name>substrate</name>
    </ligand>
</feature>
<feature type="site" description="Important for acyl-CoA specificity" evidence="1">
    <location>
        <position position="111"/>
    </location>
</feature>
<feature type="site" description="Important for substrate specificity" evidence="1">
    <location>
        <position position="192"/>
    </location>
</feature>
<protein>
    <recommendedName>
        <fullName evidence="1">Homoserine O-succinyltransferase</fullName>
        <shortName evidence="1">HST</shortName>
        <ecNumber evidence="1">2.3.1.46</ecNumber>
    </recommendedName>
    <alternativeName>
        <fullName evidence="1">Homoserine transsuccinylase</fullName>
        <shortName evidence="1">HTS</shortName>
    </alternativeName>
</protein>
<reference key="1">
    <citation type="submission" date="2007-08" db="EMBL/GenBank/DDBJ databases">
        <title>Complete sequence of Shewanella sediminis HAW-EB3.</title>
        <authorList>
            <consortium name="US DOE Joint Genome Institute"/>
            <person name="Copeland A."/>
            <person name="Lucas S."/>
            <person name="Lapidus A."/>
            <person name="Barry K."/>
            <person name="Glavina del Rio T."/>
            <person name="Dalin E."/>
            <person name="Tice H."/>
            <person name="Pitluck S."/>
            <person name="Chertkov O."/>
            <person name="Brettin T."/>
            <person name="Bruce D."/>
            <person name="Detter J.C."/>
            <person name="Han C."/>
            <person name="Schmutz J."/>
            <person name="Larimer F."/>
            <person name="Land M."/>
            <person name="Hauser L."/>
            <person name="Kyrpides N."/>
            <person name="Kim E."/>
            <person name="Zhao J.-S."/>
            <person name="Richardson P."/>
        </authorList>
    </citation>
    <scope>NUCLEOTIDE SEQUENCE [LARGE SCALE GENOMIC DNA]</scope>
    <source>
        <strain>HAW-EB3</strain>
    </source>
</reference>